<gene>
    <name evidence="1" type="primary">rpsD2</name>
    <name type="ordered locus">NE2143</name>
</gene>
<sequence length="205" mass="23333">MSRFTGPRLKIMRALGVDLPGLSRKTIASRPTPPGQHGAKLVRRRKSDFGIKLQEKQKLRFNYGLSERQLRHLMLNARKSTEPTGETLLQLLERRLDNVVFRAGFAPTVIAARQLVSHRHVRLNGKPVNIPSIRLNVGDEITIKPESLNLPIVLGTLQDLPLSRPEWLLWDEKDKTGKITHLPTAEDVPFPIDVQQVVEYYANRM</sequence>
<dbReference type="EMBL" id="AL954747">
    <property type="protein sequence ID" value="CAD86054.1"/>
    <property type="molecule type" value="Genomic_DNA"/>
</dbReference>
<dbReference type="SMR" id="Q82T00"/>
<dbReference type="STRING" id="228410.NE2143"/>
<dbReference type="GeneID" id="87105280"/>
<dbReference type="KEGG" id="neu:NE2143"/>
<dbReference type="eggNOG" id="COG0522">
    <property type="taxonomic scope" value="Bacteria"/>
</dbReference>
<dbReference type="HOGENOM" id="CLU_092403_0_1_4"/>
<dbReference type="OrthoDB" id="9803672at2"/>
<dbReference type="PhylomeDB" id="Q82T00"/>
<dbReference type="Proteomes" id="UP000001416">
    <property type="component" value="Chromosome"/>
</dbReference>
<dbReference type="GO" id="GO:0015935">
    <property type="term" value="C:small ribosomal subunit"/>
    <property type="evidence" value="ECO:0007669"/>
    <property type="project" value="InterPro"/>
</dbReference>
<dbReference type="GO" id="GO:0019843">
    <property type="term" value="F:rRNA binding"/>
    <property type="evidence" value="ECO:0007669"/>
    <property type="project" value="UniProtKB-UniRule"/>
</dbReference>
<dbReference type="GO" id="GO:0003735">
    <property type="term" value="F:structural constituent of ribosome"/>
    <property type="evidence" value="ECO:0007669"/>
    <property type="project" value="InterPro"/>
</dbReference>
<dbReference type="GO" id="GO:0042274">
    <property type="term" value="P:ribosomal small subunit biogenesis"/>
    <property type="evidence" value="ECO:0007669"/>
    <property type="project" value="TreeGrafter"/>
</dbReference>
<dbReference type="GO" id="GO:0006412">
    <property type="term" value="P:translation"/>
    <property type="evidence" value="ECO:0007669"/>
    <property type="project" value="UniProtKB-UniRule"/>
</dbReference>
<dbReference type="CDD" id="cd00165">
    <property type="entry name" value="S4"/>
    <property type="match status" value="1"/>
</dbReference>
<dbReference type="FunFam" id="3.10.290.10:FF:000001">
    <property type="entry name" value="30S ribosomal protein S4"/>
    <property type="match status" value="1"/>
</dbReference>
<dbReference type="Gene3D" id="1.10.1050.10">
    <property type="entry name" value="Ribosomal Protein S4 Delta 41, Chain A, domain 1"/>
    <property type="match status" value="1"/>
</dbReference>
<dbReference type="Gene3D" id="3.10.290.10">
    <property type="entry name" value="RNA-binding S4 domain"/>
    <property type="match status" value="1"/>
</dbReference>
<dbReference type="HAMAP" id="MF_01306_B">
    <property type="entry name" value="Ribosomal_uS4_B"/>
    <property type="match status" value="1"/>
</dbReference>
<dbReference type="InterPro" id="IPR022801">
    <property type="entry name" value="Ribosomal_uS4"/>
</dbReference>
<dbReference type="InterPro" id="IPR005709">
    <property type="entry name" value="Ribosomal_uS4_bac-type"/>
</dbReference>
<dbReference type="InterPro" id="IPR018079">
    <property type="entry name" value="Ribosomal_uS4_CS"/>
</dbReference>
<dbReference type="InterPro" id="IPR001912">
    <property type="entry name" value="Ribosomal_uS4_N"/>
</dbReference>
<dbReference type="InterPro" id="IPR002942">
    <property type="entry name" value="S4_RNA-bd"/>
</dbReference>
<dbReference type="InterPro" id="IPR036986">
    <property type="entry name" value="S4_RNA-bd_sf"/>
</dbReference>
<dbReference type="NCBIfam" id="NF003717">
    <property type="entry name" value="PRK05327.1"/>
    <property type="match status" value="1"/>
</dbReference>
<dbReference type="NCBIfam" id="TIGR01017">
    <property type="entry name" value="rpsD_bact"/>
    <property type="match status" value="1"/>
</dbReference>
<dbReference type="PANTHER" id="PTHR11831">
    <property type="entry name" value="30S 40S RIBOSOMAL PROTEIN"/>
    <property type="match status" value="1"/>
</dbReference>
<dbReference type="PANTHER" id="PTHR11831:SF4">
    <property type="entry name" value="SMALL RIBOSOMAL SUBUNIT PROTEIN US4M"/>
    <property type="match status" value="1"/>
</dbReference>
<dbReference type="Pfam" id="PF00163">
    <property type="entry name" value="Ribosomal_S4"/>
    <property type="match status" value="1"/>
</dbReference>
<dbReference type="Pfam" id="PF01479">
    <property type="entry name" value="S4"/>
    <property type="match status" value="1"/>
</dbReference>
<dbReference type="SMART" id="SM01390">
    <property type="entry name" value="Ribosomal_S4"/>
    <property type="match status" value="1"/>
</dbReference>
<dbReference type="SMART" id="SM00363">
    <property type="entry name" value="S4"/>
    <property type="match status" value="1"/>
</dbReference>
<dbReference type="SUPFAM" id="SSF55174">
    <property type="entry name" value="Alpha-L RNA-binding motif"/>
    <property type="match status" value="1"/>
</dbReference>
<dbReference type="PROSITE" id="PS00632">
    <property type="entry name" value="RIBOSOMAL_S4"/>
    <property type="match status" value="1"/>
</dbReference>
<dbReference type="PROSITE" id="PS50889">
    <property type="entry name" value="S4"/>
    <property type="match status" value="1"/>
</dbReference>
<name>RS4B_NITEU</name>
<organism>
    <name type="scientific">Nitrosomonas europaea (strain ATCC 19718 / CIP 103999 / KCTC 2705 / NBRC 14298)</name>
    <dbReference type="NCBI Taxonomy" id="228410"/>
    <lineage>
        <taxon>Bacteria</taxon>
        <taxon>Pseudomonadati</taxon>
        <taxon>Pseudomonadota</taxon>
        <taxon>Betaproteobacteria</taxon>
        <taxon>Nitrosomonadales</taxon>
        <taxon>Nitrosomonadaceae</taxon>
        <taxon>Nitrosomonas</taxon>
    </lineage>
</organism>
<keyword id="KW-1185">Reference proteome</keyword>
<keyword id="KW-0687">Ribonucleoprotein</keyword>
<keyword id="KW-0689">Ribosomal protein</keyword>
<keyword id="KW-0694">RNA-binding</keyword>
<keyword id="KW-0699">rRNA-binding</keyword>
<feature type="chain" id="PRO_0000132426" description="Small ribosomal subunit protein uS4B">
    <location>
        <begin position="1"/>
        <end position="205"/>
    </location>
</feature>
<feature type="domain" description="S4 RNA-binding" evidence="1">
    <location>
        <begin position="94"/>
        <end position="157"/>
    </location>
</feature>
<accession>Q82T00</accession>
<reference key="1">
    <citation type="journal article" date="2003" name="J. Bacteriol.">
        <title>Complete genome sequence of the ammonia-oxidizing bacterium and obligate chemolithoautotroph Nitrosomonas europaea.</title>
        <authorList>
            <person name="Chain P."/>
            <person name="Lamerdin J.E."/>
            <person name="Larimer F.W."/>
            <person name="Regala W."/>
            <person name="Lao V."/>
            <person name="Land M.L."/>
            <person name="Hauser L."/>
            <person name="Hooper A.B."/>
            <person name="Klotz M.G."/>
            <person name="Norton J."/>
            <person name="Sayavedra-Soto L.A."/>
            <person name="Arciero D.M."/>
            <person name="Hommes N.G."/>
            <person name="Whittaker M.M."/>
            <person name="Arp D.J."/>
        </authorList>
    </citation>
    <scope>NUCLEOTIDE SEQUENCE [LARGE SCALE GENOMIC DNA]</scope>
    <source>
        <strain>ATCC 19718 / CIP 103999 / KCTC 2705 / NBRC 14298</strain>
    </source>
</reference>
<protein>
    <recommendedName>
        <fullName evidence="1">Small ribosomal subunit protein uS4B</fullName>
    </recommendedName>
    <alternativeName>
        <fullName evidence="2">30S ribosomal protein S4 2</fullName>
    </alternativeName>
</protein>
<evidence type="ECO:0000255" key="1">
    <source>
        <dbReference type="HAMAP-Rule" id="MF_01306"/>
    </source>
</evidence>
<evidence type="ECO:0000305" key="2"/>
<comment type="function">
    <text evidence="1">One of the primary rRNA binding proteins, it binds directly to 16S rRNA where it nucleates assembly of the body of the 30S subunit.</text>
</comment>
<comment type="function">
    <text evidence="1">With S5 and S12 plays an important role in translational accuracy.</text>
</comment>
<comment type="subunit">
    <text evidence="1">Part of the 30S ribosomal subunit. Contacts protein S5. The interaction surface between S4 and S5 is involved in control of translational fidelity.</text>
</comment>
<comment type="similarity">
    <text evidence="1">Belongs to the universal ribosomal protein uS4 family.</text>
</comment>
<proteinExistence type="inferred from homology"/>